<sequence>MSTFPASLLILNGKGANEPQLREAVNLLRDEGIDIHVRVTWEKGDAVRFIDEALQLNVETVIAGGGDGTINEVATALVERGSKMALGILPLGTANDFATSVGIPQDLASALKLAIVGRDVPIDIARVNDKTGFINMATGGFGTRITTETPEKLKAALGGVSYLIHGLMRMDTLKPDRCEIRGENFHWQGDALVIGIGNGRQAGGGQQLCPEALINDGLLHLRIFTGEELIPALFSTLANPENSPNIVDGVSSWFEITAPHEMTFNLDGEPLSGKTFRMELLPAALRCRLPPDCPLLR</sequence>
<organism>
    <name type="scientific">Klebsiella pneumoniae (strain 342)</name>
    <dbReference type="NCBI Taxonomy" id="507522"/>
    <lineage>
        <taxon>Bacteria</taxon>
        <taxon>Pseudomonadati</taxon>
        <taxon>Pseudomonadota</taxon>
        <taxon>Gammaproteobacteria</taxon>
        <taxon>Enterobacterales</taxon>
        <taxon>Enterobacteriaceae</taxon>
        <taxon>Klebsiella/Raoultella group</taxon>
        <taxon>Klebsiella</taxon>
        <taxon>Klebsiella pneumoniae complex</taxon>
    </lineage>
</organism>
<accession>B5XPB3</accession>
<feature type="chain" id="PRO_1000144871" description="Probable lipid kinase YegS-like">
    <location>
        <begin position="1"/>
        <end position="297"/>
    </location>
</feature>
<feature type="domain" description="DAGKc" evidence="1">
    <location>
        <begin position="2"/>
        <end position="131"/>
    </location>
</feature>
<feature type="active site" description="Proton acceptor" evidence="1">
    <location>
        <position position="269"/>
    </location>
</feature>
<feature type="binding site" evidence="1">
    <location>
        <position position="40"/>
    </location>
    <ligand>
        <name>ATP</name>
        <dbReference type="ChEBI" id="CHEBI:30616"/>
    </ligand>
</feature>
<feature type="binding site" evidence="1">
    <location>
        <begin position="66"/>
        <end position="72"/>
    </location>
    <ligand>
        <name>ATP</name>
        <dbReference type="ChEBI" id="CHEBI:30616"/>
    </ligand>
</feature>
<feature type="binding site" evidence="1">
    <location>
        <position position="93"/>
    </location>
    <ligand>
        <name>ATP</name>
        <dbReference type="ChEBI" id="CHEBI:30616"/>
    </ligand>
</feature>
<feature type="binding site" evidence="1">
    <location>
        <position position="213"/>
    </location>
    <ligand>
        <name>Mg(2+)</name>
        <dbReference type="ChEBI" id="CHEBI:18420"/>
    </ligand>
</feature>
<feature type="binding site" evidence="1">
    <location>
        <position position="216"/>
    </location>
    <ligand>
        <name>Mg(2+)</name>
        <dbReference type="ChEBI" id="CHEBI:18420"/>
    </ligand>
</feature>
<feature type="binding site" evidence="1">
    <location>
        <position position="218"/>
    </location>
    <ligand>
        <name>Mg(2+)</name>
        <dbReference type="ChEBI" id="CHEBI:18420"/>
    </ligand>
</feature>
<gene>
    <name type="ordered locus">KPK_1632</name>
</gene>
<reference key="1">
    <citation type="journal article" date="2008" name="PLoS Genet.">
        <title>Complete genome sequence of the N2-fixing broad host range endophyte Klebsiella pneumoniae 342 and virulence predictions verified in mice.</title>
        <authorList>
            <person name="Fouts D.E."/>
            <person name="Tyler H.L."/>
            <person name="DeBoy R.T."/>
            <person name="Daugherty S."/>
            <person name="Ren Q."/>
            <person name="Badger J.H."/>
            <person name="Durkin A.S."/>
            <person name="Huot H."/>
            <person name="Shrivastava S."/>
            <person name="Kothari S."/>
            <person name="Dodson R.J."/>
            <person name="Mohamoud Y."/>
            <person name="Khouri H."/>
            <person name="Roesch L.F.W."/>
            <person name="Krogfelt K.A."/>
            <person name="Struve C."/>
            <person name="Triplett E.W."/>
            <person name="Methe B.A."/>
        </authorList>
    </citation>
    <scope>NUCLEOTIDE SEQUENCE [LARGE SCALE GENOMIC DNA]</scope>
    <source>
        <strain>342</strain>
    </source>
</reference>
<comment type="function">
    <text evidence="1">Probably phosphorylates lipids; the in vivo substrate is unknown.</text>
</comment>
<comment type="cofactor">
    <cofactor evidence="1">
        <name>Mg(2+)</name>
        <dbReference type="ChEBI" id="CHEBI:18420"/>
    </cofactor>
    <cofactor evidence="1">
        <name>Ca(2+)</name>
        <dbReference type="ChEBI" id="CHEBI:29108"/>
    </cofactor>
    <text evidence="1">Binds 1 Mg(2+) ion per subunit. Ca(2+) may be able to substitute.</text>
</comment>
<comment type="subcellular location">
    <subcellularLocation>
        <location evidence="1">Cytoplasm</location>
    </subcellularLocation>
</comment>
<comment type="similarity">
    <text evidence="1">Belongs to the diacylglycerol/lipid kinase family. YegS lipid kinase subfamily.</text>
</comment>
<protein>
    <recommendedName>
        <fullName evidence="1">Probable lipid kinase YegS-like</fullName>
        <ecNumber evidence="1">2.7.1.-</ecNumber>
    </recommendedName>
</protein>
<proteinExistence type="inferred from homology"/>
<evidence type="ECO:0000255" key="1">
    <source>
        <dbReference type="HAMAP-Rule" id="MF_01377"/>
    </source>
</evidence>
<dbReference type="EC" id="2.7.1.-" evidence="1"/>
<dbReference type="EMBL" id="CP000964">
    <property type="protein sequence ID" value="ACI11192.1"/>
    <property type="molecule type" value="Genomic_DNA"/>
</dbReference>
<dbReference type="SMR" id="B5XPB3"/>
<dbReference type="KEGG" id="kpe:KPK_1632"/>
<dbReference type="HOGENOM" id="CLU_045532_1_1_6"/>
<dbReference type="BioCyc" id="KPNE507522:GI0B-1631-MONOMER"/>
<dbReference type="Proteomes" id="UP000001734">
    <property type="component" value="Chromosome"/>
</dbReference>
<dbReference type="GO" id="GO:0005737">
    <property type="term" value="C:cytoplasm"/>
    <property type="evidence" value="ECO:0007669"/>
    <property type="project" value="UniProtKB-SubCell"/>
</dbReference>
<dbReference type="GO" id="GO:0005886">
    <property type="term" value="C:plasma membrane"/>
    <property type="evidence" value="ECO:0007669"/>
    <property type="project" value="TreeGrafter"/>
</dbReference>
<dbReference type="GO" id="GO:0005524">
    <property type="term" value="F:ATP binding"/>
    <property type="evidence" value="ECO:0007669"/>
    <property type="project" value="UniProtKB-UniRule"/>
</dbReference>
<dbReference type="GO" id="GO:0001727">
    <property type="term" value="F:lipid kinase activity"/>
    <property type="evidence" value="ECO:0007669"/>
    <property type="project" value="UniProtKB-UniRule"/>
</dbReference>
<dbReference type="GO" id="GO:0000287">
    <property type="term" value="F:magnesium ion binding"/>
    <property type="evidence" value="ECO:0007669"/>
    <property type="project" value="UniProtKB-UniRule"/>
</dbReference>
<dbReference type="GO" id="GO:0008654">
    <property type="term" value="P:phospholipid biosynthetic process"/>
    <property type="evidence" value="ECO:0007669"/>
    <property type="project" value="UniProtKB-UniRule"/>
</dbReference>
<dbReference type="Gene3D" id="2.60.200.40">
    <property type="match status" value="1"/>
</dbReference>
<dbReference type="Gene3D" id="3.40.50.10330">
    <property type="entry name" value="Probable inorganic polyphosphate/atp-NAD kinase, domain 1"/>
    <property type="match status" value="1"/>
</dbReference>
<dbReference type="HAMAP" id="MF_01377">
    <property type="entry name" value="YegS"/>
    <property type="match status" value="1"/>
</dbReference>
<dbReference type="InterPro" id="IPR017438">
    <property type="entry name" value="ATP-NAD_kinase_N"/>
</dbReference>
<dbReference type="InterPro" id="IPR005218">
    <property type="entry name" value="Diacylglycerol/lipid_kinase"/>
</dbReference>
<dbReference type="InterPro" id="IPR001206">
    <property type="entry name" value="Diacylglycerol_kinase_cat_dom"/>
</dbReference>
<dbReference type="InterPro" id="IPR022433">
    <property type="entry name" value="Lip_kinase_YegS"/>
</dbReference>
<dbReference type="InterPro" id="IPR050187">
    <property type="entry name" value="Lipid_Phosphate_FormReg"/>
</dbReference>
<dbReference type="InterPro" id="IPR016064">
    <property type="entry name" value="NAD/diacylglycerol_kinase_sf"/>
</dbReference>
<dbReference type="InterPro" id="IPR045540">
    <property type="entry name" value="YegS/DAGK_C"/>
</dbReference>
<dbReference type="NCBIfam" id="TIGR03702">
    <property type="entry name" value="lip_kinase_YegS"/>
    <property type="match status" value="1"/>
</dbReference>
<dbReference type="NCBIfam" id="NF009602">
    <property type="entry name" value="PRK13054.1"/>
    <property type="match status" value="1"/>
</dbReference>
<dbReference type="NCBIfam" id="TIGR00147">
    <property type="entry name" value="YegS/Rv2252/BmrU family lipid kinase"/>
    <property type="match status" value="1"/>
</dbReference>
<dbReference type="PANTHER" id="PTHR12358:SF106">
    <property type="entry name" value="LIPID KINASE YEGS"/>
    <property type="match status" value="1"/>
</dbReference>
<dbReference type="PANTHER" id="PTHR12358">
    <property type="entry name" value="SPHINGOSINE KINASE"/>
    <property type="match status" value="1"/>
</dbReference>
<dbReference type="Pfam" id="PF00781">
    <property type="entry name" value="DAGK_cat"/>
    <property type="match status" value="1"/>
</dbReference>
<dbReference type="Pfam" id="PF19279">
    <property type="entry name" value="YegS_C"/>
    <property type="match status" value="1"/>
</dbReference>
<dbReference type="SMART" id="SM00046">
    <property type="entry name" value="DAGKc"/>
    <property type="match status" value="1"/>
</dbReference>
<dbReference type="SUPFAM" id="SSF111331">
    <property type="entry name" value="NAD kinase/diacylglycerol kinase-like"/>
    <property type="match status" value="1"/>
</dbReference>
<dbReference type="PROSITE" id="PS50146">
    <property type="entry name" value="DAGK"/>
    <property type="match status" value="1"/>
</dbReference>
<name>YEGS_KLEP3</name>
<keyword id="KW-0067">ATP-binding</keyword>
<keyword id="KW-0963">Cytoplasm</keyword>
<keyword id="KW-0418">Kinase</keyword>
<keyword id="KW-0444">Lipid biosynthesis</keyword>
<keyword id="KW-0443">Lipid metabolism</keyword>
<keyword id="KW-0460">Magnesium</keyword>
<keyword id="KW-0479">Metal-binding</keyword>
<keyword id="KW-0547">Nucleotide-binding</keyword>
<keyword id="KW-0594">Phospholipid biosynthesis</keyword>
<keyword id="KW-1208">Phospholipid metabolism</keyword>
<keyword id="KW-0808">Transferase</keyword>